<comment type="function">
    <text evidence="1">The RuvA-RuvB-RuvC complex processes Holliday junction (HJ) DNA during genetic recombination and DNA repair, while the RuvA-RuvB complex plays an important role in the rescue of blocked DNA replication forks via replication fork reversal (RFR). RuvA specifically binds to HJ cruciform DNA, conferring on it an open structure. The RuvB hexamer acts as an ATP-dependent pump, pulling dsDNA into and through the RuvAB complex. HJ branch migration allows RuvC to scan DNA until it finds its consensus sequence, where it cleaves and resolves the cruciform DNA.</text>
</comment>
<comment type="subunit">
    <text evidence="1">Homotetramer. Forms an RuvA(8)-RuvB(12)-Holliday junction (HJ) complex. HJ DNA is sandwiched between 2 RuvA tetramers; dsDNA enters through RuvA and exits via RuvB. An RuvB hexamer assembles on each DNA strand where it exits the tetramer. Each RuvB hexamer is contacted by two RuvA subunits (via domain III) on 2 adjacent RuvB subunits; this complex drives branch migration. In the full resolvosome a probable DNA-RuvA(4)-RuvB(12)-RuvC(2) complex forms which resolves the HJ.</text>
</comment>
<comment type="subcellular location">
    <subcellularLocation>
        <location evidence="1">Cytoplasm</location>
    </subcellularLocation>
</comment>
<comment type="domain">
    <text evidence="1">Has three domains with a flexible linker between the domains II and III and assumes an 'L' shape. Domain III is highly mobile and contacts RuvB.</text>
</comment>
<comment type="similarity">
    <text evidence="1">Belongs to the RuvA family.</text>
</comment>
<feature type="chain" id="PRO_1000074410" description="Holliday junction branch migration complex subunit RuvA">
    <location>
        <begin position="1"/>
        <end position="204"/>
    </location>
</feature>
<feature type="region of interest" description="Domain I" evidence="1">
    <location>
        <begin position="1"/>
        <end position="64"/>
    </location>
</feature>
<feature type="region of interest" description="Domain II" evidence="1">
    <location>
        <begin position="65"/>
        <end position="143"/>
    </location>
</feature>
<feature type="region of interest" description="Flexible linker" evidence="1">
    <location>
        <begin position="144"/>
        <end position="154"/>
    </location>
</feature>
<feature type="region of interest" description="Domain III" evidence="1">
    <location>
        <begin position="154"/>
        <end position="204"/>
    </location>
</feature>
<keyword id="KW-0963">Cytoplasm</keyword>
<keyword id="KW-0227">DNA damage</keyword>
<keyword id="KW-0233">DNA recombination</keyword>
<keyword id="KW-0234">DNA repair</keyword>
<keyword id="KW-0238">DNA-binding</keyword>
<accession>A9IYK7</accession>
<sequence length="204" mass="22105">MIGKLKGTLEHIFEDYIVLDVHGVGYVVFISNRLRPSLPSVGEALSLFIETHVREEAIRLFGFATRAEQEWFCMLQNVPGVGAKVALAILGTLSPDELAQAIALNDVAMISRAPGVGKKVSERIVGELKSKTLPFEQAVKTVSVPQREITHQPAHDALSALMKLGFEREQAARALALAMNALEGEAVSSALLIRHSLKLLSSPT</sequence>
<gene>
    <name evidence="1" type="primary">ruvA</name>
    <name type="ordered locus">BT_2376</name>
</gene>
<reference key="1">
    <citation type="journal article" date="2007" name="Nat. Genet.">
        <title>Genomic analysis of Bartonella identifies type IV secretion systems as host adaptability factors.</title>
        <authorList>
            <person name="Saenz H.L."/>
            <person name="Engel P."/>
            <person name="Stoeckli M.C."/>
            <person name="Lanz C."/>
            <person name="Raddatz G."/>
            <person name="Vayssier-Taussat M."/>
            <person name="Birtles R."/>
            <person name="Schuster S.C."/>
            <person name="Dehio C."/>
        </authorList>
    </citation>
    <scope>NUCLEOTIDE SEQUENCE [LARGE SCALE GENOMIC DNA]</scope>
    <source>
        <strain>CIP 105476 / IBS 506</strain>
    </source>
</reference>
<proteinExistence type="inferred from homology"/>
<dbReference type="EMBL" id="AM260525">
    <property type="protein sequence ID" value="CAK02381.1"/>
    <property type="molecule type" value="Genomic_DNA"/>
</dbReference>
<dbReference type="RefSeq" id="WP_012232439.1">
    <property type="nucleotide sequence ID" value="NC_010161.1"/>
</dbReference>
<dbReference type="SMR" id="A9IYK7"/>
<dbReference type="KEGG" id="btr:BT_2376"/>
<dbReference type="eggNOG" id="COG0632">
    <property type="taxonomic scope" value="Bacteria"/>
</dbReference>
<dbReference type="HOGENOM" id="CLU_087936_3_0_5"/>
<dbReference type="Proteomes" id="UP000001592">
    <property type="component" value="Chromosome"/>
</dbReference>
<dbReference type="GO" id="GO:0005737">
    <property type="term" value="C:cytoplasm"/>
    <property type="evidence" value="ECO:0007669"/>
    <property type="project" value="UniProtKB-SubCell"/>
</dbReference>
<dbReference type="GO" id="GO:0009379">
    <property type="term" value="C:Holliday junction helicase complex"/>
    <property type="evidence" value="ECO:0007669"/>
    <property type="project" value="InterPro"/>
</dbReference>
<dbReference type="GO" id="GO:0048476">
    <property type="term" value="C:Holliday junction resolvase complex"/>
    <property type="evidence" value="ECO:0007669"/>
    <property type="project" value="UniProtKB-UniRule"/>
</dbReference>
<dbReference type="GO" id="GO:0005524">
    <property type="term" value="F:ATP binding"/>
    <property type="evidence" value="ECO:0007669"/>
    <property type="project" value="InterPro"/>
</dbReference>
<dbReference type="GO" id="GO:0000400">
    <property type="term" value="F:four-way junction DNA binding"/>
    <property type="evidence" value="ECO:0007669"/>
    <property type="project" value="UniProtKB-UniRule"/>
</dbReference>
<dbReference type="GO" id="GO:0009378">
    <property type="term" value="F:four-way junction helicase activity"/>
    <property type="evidence" value="ECO:0007669"/>
    <property type="project" value="InterPro"/>
</dbReference>
<dbReference type="GO" id="GO:0006310">
    <property type="term" value="P:DNA recombination"/>
    <property type="evidence" value="ECO:0007669"/>
    <property type="project" value="UniProtKB-UniRule"/>
</dbReference>
<dbReference type="GO" id="GO:0006281">
    <property type="term" value="P:DNA repair"/>
    <property type="evidence" value="ECO:0007669"/>
    <property type="project" value="UniProtKB-UniRule"/>
</dbReference>
<dbReference type="CDD" id="cd14332">
    <property type="entry name" value="UBA_RuvA_C"/>
    <property type="match status" value="1"/>
</dbReference>
<dbReference type="Gene3D" id="1.10.150.20">
    <property type="entry name" value="5' to 3' exonuclease, C-terminal subdomain"/>
    <property type="match status" value="1"/>
</dbReference>
<dbReference type="Gene3D" id="1.10.8.10">
    <property type="entry name" value="DNA helicase RuvA subunit, C-terminal domain"/>
    <property type="match status" value="1"/>
</dbReference>
<dbReference type="Gene3D" id="2.40.50.140">
    <property type="entry name" value="Nucleic acid-binding proteins"/>
    <property type="match status" value="1"/>
</dbReference>
<dbReference type="HAMAP" id="MF_00031">
    <property type="entry name" value="DNA_HJ_migration_RuvA"/>
    <property type="match status" value="1"/>
</dbReference>
<dbReference type="InterPro" id="IPR013849">
    <property type="entry name" value="DNA_helicase_Holl-junc_RuvA_I"/>
</dbReference>
<dbReference type="InterPro" id="IPR012340">
    <property type="entry name" value="NA-bd_OB-fold"/>
</dbReference>
<dbReference type="InterPro" id="IPR000085">
    <property type="entry name" value="RuvA"/>
</dbReference>
<dbReference type="InterPro" id="IPR010994">
    <property type="entry name" value="RuvA_2-like"/>
</dbReference>
<dbReference type="InterPro" id="IPR011114">
    <property type="entry name" value="RuvA_C"/>
</dbReference>
<dbReference type="InterPro" id="IPR036267">
    <property type="entry name" value="RuvA_C_sf"/>
</dbReference>
<dbReference type="NCBIfam" id="TIGR00084">
    <property type="entry name" value="ruvA"/>
    <property type="match status" value="1"/>
</dbReference>
<dbReference type="Pfam" id="PF14520">
    <property type="entry name" value="HHH_5"/>
    <property type="match status" value="1"/>
</dbReference>
<dbReference type="Pfam" id="PF07499">
    <property type="entry name" value="RuvA_C"/>
    <property type="match status" value="1"/>
</dbReference>
<dbReference type="Pfam" id="PF01330">
    <property type="entry name" value="RuvA_N"/>
    <property type="match status" value="1"/>
</dbReference>
<dbReference type="SUPFAM" id="SSF46929">
    <property type="entry name" value="DNA helicase RuvA subunit, C-terminal domain"/>
    <property type="match status" value="1"/>
</dbReference>
<dbReference type="SUPFAM" id="SSF50249">
    <property type="entry name" value="Nucleic acid-binding proteins"/>
    <property type="match status" value="1"/>
</dbReference>
<dbReference type="SUPFAM" id="SSF47781">
    <property type="entry name" value="RuvA domain 2-like"/>
    <property type="match status" value="1"/>
</dbReference>
<protein>
    <recommendedName>
        <fullName evidence="1">Holliday junction branch migration complex subunit RuvA</fullName>
    </recommendedName>
</protein>
<organism>
    <name type="scientific">Bartonella tribocorum (strain CIP 105476 / IBS 506)</name>
    <dbReference type="NCBI Taxonomy" id="382640"/>
    <lineage>
        <taxon>Bacteria</taxon>
        <taxon>Pseudomonadati</taxon>
        <taxon>Pseudomonadota</taxon>
        <taxon>Alphaproteobacteria</taxon>
        <taxon>Hyphomicrobiales</taxon>
        <taxon>Bartonellaceae</taxon>
        <taxon>Bartonella</taxon>
    </lineage>
</organism>
<evidence type="ECO:0000255" key="1">
    <source>
        <dbReference type="HAMAP-Rule" id="MF_00031"/>
    </source>
</evidence>
<name>RUVA_BART1</name>